<accession>A2S8D3</accession>
<proteinExistence type="inferred from homology"/>
<feature type="chain" id="PRO_1000013297" description="Large ribosomal subunit protein bL34">
    <location>
        <begin position="1"/>
        <end position="44"/>
    </location>
</feature>
<reference key="1">
    <citation type="journal article" date="2010" name="Genome Biol. Evol.">
        <title>Continuing evolution of Burkholderia mallei through genome reduction and large-scale rearrangements.</title>
        <authorList>
            <person name="Losada L."/>
            <person name="Ronning C.M."/>
            <person name="DeShazer D."/>
            <person name="Woods D."/>
            <person name="Fedorova N."/>
            <person name="Kim H.S."/>
            <person name="Shabalina S.A."/>
            <person name="Pearson T.R."/>
            <person name="Brinkac L."/>
            <person name="Tan P."/>
            <person name="Nandi T."/>
            <person name="Crabtree J."/>
            <person name="Badger J."/>
            <person name="Beckstrom-Sternberg S."/>
            <person name="Saqib M."/>
            <person name="Schutzer S.E."/>
            <person name="Keim P."/>
            <person name="Nierman W.C."/>
        </authorList>
    </citation>
    <scope>NUCLEOTIDE SEQUENCE [LARGE SCALE GENOMIC DNA]</scope>
    <source>
        <strain>NCTC 10229</strain>
    </source>
</reference>
<sequence length="44" mass="5195">MKRTYQPSVTRRKRTHGFRVRMKTAGGRKVINARRAKGRKRLAI</sequence>
<keyword id="KW-0687">Ribonucleoprotein</keyword>
<keyword id="KW-0689">Ribosomal protein</keyword>
<gene>
    <name evidence="1" type="primary">rpmH</name>
    <name type="ordered locus">BMA10229_A2238</name>
</gene>
<organism>
    <name type="scientific">Burkholderia mallei (strain NCTC 10229)</name>
    <dbReference type="NCBI Taxonomy" id="412022"/>
    <lineage>
        <taxon>Bacteria</taxon>
        <taxon>Pseudomonadati</taxon>
        <taxon>Pseudomonadota</taxon>
        <taxon>Betaproteobacteria</taxon>
        <taxon>Burkholderiales</taxon>
        <taxon>Burkholderiaceae</taxon>
        <taxon>Burkholderia</taxon>
        <taxon>pseudomallei group</taxon>
    </lineage>
</organism>
<name>RL34_BURM9</name>
<comment type="similarity">
    <text evidence="1">Belongs to the bacterial ribosomal protein bL34 family.</text>
</comment>
<evidence type="ECO:0000255" key="1">
    <source>
        <dbReference type="HAMAP-Rule" id="MF_00391"/>
    </source>
</evidence>
<evidence type="ECO:0000305" key="2"/>
<dbReference type="EMBL" id="CP000546">
    <property type="protein sequence ID" value="ABN02294.1"/>
    <property type="molecule type" value="Genomic_DNA"/>
</dbReference>
<dbReference type="RefSeq" id="WP_004198824.1">
    <property type="nucleotide sequence ID" value="NC_008836.1"/>
</dbReference>
<dbReference type="SMR" id="A2S8D3"/>
<dbReference type="GeneID" id="98107775"/>
<dbReference type="KEGG" id="bml:BMA10229_A2238"/>
<dbReference type="HOGENOM" id="CLU_129938_2_0_4"/>
<dbReference type="Proteomes" id="UP000002283">
    <property type="component" value="Chromosome I"/>
</dbReference>
<dbReference type="GO" id="GO:1990904">
    <property type="term" value="C:ribonucleoprotein complex"/>
    <property type="evidence" value="ECO:0007669"/>
    <property type="project" value="UniProtKB-KW"/>
</dbReference>
<dbReference type="GO" id="GO:0005840">
    <property type="term" value="C:ribosome"/>
    <property type="evidence" value="ECO:0007669"/>
    <property type="project" value="UniProtKB-KW"/>
</dbReference>
<dbReference type="GO" id="GO:0003735">
    <property type="term" value="F:structural constituent of ribosome"/>
    <property type="evidence" value="ECO:0007669"/>
    <property type="project" value="InterPro"/>
</dbReference>
<dbReference type="GO" id="GO:0006412">
    <property type="term" value="P:translation"/>
    <property type="evidence" value="ECO:0007669"/>
    <property type="project" value="UniProtKB-UniRule"/>
</dbReference>
<dbReference type="FunFam" id="1.10.287.3980:FF:000001">
    <property type="entry name" value="Mitochondrial ribosomal protein L34"/>
    <property type="match status" value="1"/>
</dbReference>
<dbReference type="Gene3D" id="1.10.287.3980">
    <property type="match status" value="1"/>
</dbReference>
<dbReference type="HAMAP" id="MF_00391">
    <property type="entry name" value="Ribosomal_bL34"/>
    <property type="match status" value="1"/>
</dbReference>
<dbReference type="InterPro" id="IPR000271">
    <property type="entry name" value="Ribosomal_bL34"/>
</dbReference>
<dbReference type="InterPro" id="IPR020939">
    <property type="entry name" value="Ribosomal_bL34_CS"/>
</dbReference>
<dbReference type="NCBIfam" id="TIGR01030">
    <property type="entry name" value="rpmH_bact"/>
    <property type="match status" value="1"/>
</dbReference>
<dbReference type="PANTHER" id="PTHR14503:SF4">
    <property type="entry name" value="LARGE RIBOSOMAL SUBUNIT PROTEIN BL34M"/>
    <property type="match status" value="1"/>
</dbReference>
<dbReference type="PANTHER" id="PTHR14503">
    <property type="entry name" value="MITOCHONDRIAL RIBOSOMAL PROTEIN 34 FAMILY MEMBER"/>
    <property type="match status" value="1"/>
</dbReference>
<dbReference type="Pfam" id="PF00468">
    <property type="entry name" value="Ribosomal_L34"/>
    <property type="match status" value="1"/>
</dbReference>
<dbReference type="PROSITE" id="PS00784">
    <property type="entry name" value="RIBOSOMAL_L34"/>
    <property type="match status" value="1"/>
</dbReference>
<protein>
    <recommendedName>
        <fullName evidence="1">Large ribosomal subunit protein bL34</fullName>
    </recommendedName>
    <alternativeName>
        <fullName evidence="2">50S ribosomal protein L34</fullName>
    </alternativeName>
</protein>